<name>NCAP_I49A2</name>
<keyword id="KW-0167">Capsid protein</keyword>
<keyword id="KW-1139">Helical capsid protein</keyword>
<keyword id="KW-1048">Host nucleus</keyword>
<keyword id="KW-0945">Host-virus interaction</keyword>
<keyword id="KW-0687">Ribonucleoprotein</keyword>
<keyword id="KW-0694">RNA-binding</keyword>
<keyword id="KW-0543">Viral nucleoprotein</keyword>
<keyword id="KW-1163">Viral penetration into host nucleus</keyword>
<keyword id="KW-0946">Virion</keyword>
<keyword id="KW-1160">Virus entry into host cell</keyword>
<dbReference type="EMBL" id="M63760">
    <property type="protein sequence ID" value="AAA52259.1"/>
    <property type="molecule type" value="Genomic_RNA"/>
</dbReference>
<dbReference type="SMR" id="P26080"/>
<dbReference type="GO" id="GO:0019029">
    <property type="term" value="C:helical viral capsid"/>
    <property type="evidence" value="ECO:0007669"/>
    <property type="project" value="UniProtKB-UniRule"/>
</dbReference>
<dbReference type="GO" id="GO:0043657">
    <property type="term" value="C:host cell"/>
    <property type="evidence" value="ECO:0007669"/>
    <property type="project" value="GOC"/>
</dbReference>
<dbReference type="GO" id="GO:0042025">
    <property type="term" value="C:host cell nucleus"/>
    <property type="evidence" value="ECO:0007669"/>
    <property type="project" value="UniProtKB-SubCell"/>
</dbReference>
<dbReference type="GO" id="GO:1990904">
    <property type="term" value="C:ribonucleoprotein complex"/>
    <property type="evidence" value="ECO:0007669"/>
    <property type="project" value="UniProtKB-KW"/>
</dbReference>
<dbReference type="GO" id="GO:0019013">
    <property type="term" value="C:viral nucleocapsid"/>
    <property type="evidence" value="ECO:0007669"/>
    <property type="project" value="UniProtKB-UniRule"/>
</dbReference>
<dbReference type="GO" id="GO:0003723">
    <property type="term" value="F:RNA binding"/>
    <property type="evidence" value="ECO:0007669"/>
    <property type="project" value="UniProtKB-UniRule"/>
</dbReference>
<dbReference type="GO" id="GO:0005198">
    <property type="term" value="F:structural molecule activity"/>
    <property type="evidence" value="ECO:0007669"/>
    <property type="project" value="UniProtKB-UniRule"/>
</dbReference>
<dbReference type="GO" id="GO:0046718">
    <property type="term" value="P:symbiont entry into host cell"/>
    <property type="evidence" value="ECO:0007669"/>
    <property type="project" value="UniProtKB-KW"/>
</dbReference>
<dbReference type="GO" id="GO:0075732">
    <property type="term" value="P:viral penetration into host nucleus"/>
    <property type="evidence" value="ECO:0007669"/>
    <property type="project" value="UniProtKB-UniRule"/>
</dbReference>
<dbReference type="HAMAP" id="MF_04070">
    <property type="entry name" value="INFV_NCAP"/>
    <property type="match status" value="1"/>
</dbReference>
<dbReference type="InterPro" id="IPR002141">
    <property type="entry name" value="Flu_NP"/>
</dbReference>
<dbReference type="Pfam" id="PF00506">
    <property type="entry name" value="Flu_NP"/>
    <property type="match status" value="1"/>
</dbReference>
<dbReference type="SUPFAM" id="SSF161003">
    <property type="entry name" value="flu NP-like"/>
    <property type="match status" value="1"/>
</dbReference>
<comment type="function">
    <text evidence="1">Encapsidates the negative strand viral RNA, protecting it from nucleases. The encapsidated genomic RNA is termed the ribonucleoprotein (RNP) and serves as template for transcription and replication. The RNP needs to be localized in the host nucleus to start an infectious cycle, but is too large to diffuse through the nuclear pore complex. NP comprises at least 2 nuclear localization signals that are responsible for the active RNP import into the nucleus through cellular importin alpha/beta pathway. Later in the infection, nclear export of RNPs are mediated through viral proteins NEP interacting with M1 which binds nucleoproteins. It is possible that nucleoprotein binds directly host exportin-1/XPO1 and plays an active role in RNPs nuclear export. M1 interaction with RNP seems to hide nucleoprotein's nuclear localization signals. Soon after a virion infects a new cell, M1 dissociates from the RNP under acidification of the virion driven by M2 protein. Dissociation of M1 from RNP unmasks nucleoprotein's nuclear localization signals, targeting the RNP to the nucleus.</text>
</comment>
<comment type="subunit">
    <text evidence="1">Homomultimerizes to form the nucleocapsid. May bind host exportin-1/XPO1. Binds to viral genomic RNA. Protein-RNA contacts are mediated by a combination of electrostatic interactions between positively charged residues and the phosphate backbone and planar interactions between aromatic side chains and bases.</text>
</comment>
<comment type="subcellular location">
    <subcellularLocation>
        <location evidence="1">Virion</location>
    </subcellularLocation>
    <subcellularLocation>
        <location evidence="1">Host nucleus</location>
    </subcellularLocation>
</comment>
<comment type="PTM">
    <text evidence="1">Late in virus-infected cells, may be cleaved from a 56-kDa protein to a 53-kDa protein by a cellular caspase. This cleavage might be a marker for the onset of apoptosis in infected cells or have a specific function in virus host interaction.</text>
</comment>
<comment type="similarity">
    <text evidence="1">Belongs to the influenza viruses nucleoprotein family.</text>
</comment>
<sequence length="498" mass="56199">MASQGTKRSYEQMETGGERQNTTEIRASVGRMIGGIGRFYIQMCTELKLSDYEGRLIQNSITIERMVLSAFDERRNKYLEEHPSAGKDPKKTGGPIYRRIDGKWIRELILYDKEEIRRIWRQANNGEDATAGLTHMMIWHSNLNDATYQRTRALVRTGMDPRMCSLMQGSTLPRRSGAAGAAVKGVGTMVMELIRMIKRGINDRNFWRGENGRRTRIAYERMCNILKGKFQTAAQRAMMDQVRESRNPGNAEIEDLIFLARSALILRGSVAHKSCLPACVYGLAVASGHDFEREGYSLVGIDPFRLLQNSQVFSLIRPNENPAHKSQLVWMACHSAAFEDLRVSSFIRGKKVVPRGQLSTRGVQIASNENMETMDSSTLELRSRYWAIRTRSGGNTNQQRASAGQISVQPTFSVQRNLPFERATVMAAFTGNTEGRTSDMRTEIIRIMESARPEDVSFQGRGVFELSDEKATSPIVPSFDMSNEGSYFFGDNAEEYDN</sequence>
<protein>
    <recommendedName>
        <fullName evidence="1">Nucleoprotein</fullName>
    </recommendedName>
    <alternativeName>
        <fullName evidence="1">Nucleocapsid protein</fullName>
        <shortName evidence="1">Protein N</shortName>
    </alternativeName>
</protein>
<gene>
    <name evidence="1" type="primary">NP</name>
</gene>
<organismHost>
    <name type="scientific">Aves</name>
    <dbReference type="NCBI Taxonomy" id="8782"/>
</organismHost>
<organismHost>
    <name type="scientific">Homo sapiens</name>
    <name type="common">Human</name>
    <dbReference type="NCBI Taxonomy" id="9606"/>
</organismHost>
<organismHost>
    <name type="scientific">Sus scrofa</name>
    <name type="common">Pig</name>
    <dbReference type="NCBI Taxonomy" id="9823"/>
</organismHost>
<proteinExistence type="inferred from homology"/>
<reference key="1">
    <citation type="journal article" date="1991" name="J. Virol.">
        <title>Evolution of influenza A virus nucleoprotein genes: implications for the origins of H1N1 human and classical swine viruses.</title>
        <authorList>
            <person name="Gorman O.T."/>
            <person name="Bean W.J."/>
            <person name="Kawaoka Y."/>
            <person name="Donatelli I."/>
            <person name="Guo Y."/>
            <person name="Webster R.G."/>
        </authorList>
    </citation>
    <scope>NUCLEOTIDE SEQUENCE [GENOMIC RNA]</scope>
</reference>
<accession>P26080</accession>
<evidence type="ECO:0000255" key="1">
    <source>
        <dbReference type="HAMAP-Rule" id="MF_04070"/>
    </source>
</evidence>
<evidence type="ECO:0000256" key="2">
    <source>
        <dbReference type="SAM" id="MobiDB-lite"/>
    </source>
</evidence>
<feature type="chain" id="PRO_0000079116" description="Nucleoprotein">
    <location>
        <begin position="1"/>
        <end position="498"/>
    </location>
</feature>
<feature type="region of interest" description="Disordered" evidence="2">
    <location>
        <begin position="1"/>
        <end position="23"/>
    </location>
</feature>
<feature type="short sequence motif" description="Unconventional nuclear localization signal" evidence="1">
    <location>
        <begin position="1"/>
        <end position="18"/>
    </location>
</feature>
<feature type="short sequence motif" description="Bipartite nuclear localization signal" evidence="1">
    <location>
        <begin position="198"/>
        <end position="216"/>
    </location>
</feature>
<organism>
    <name type="scientific">Influenza A virus (strain A/Swine/41/1949 H1N1)</name>
    <dbReference type="NCBI Taxonomy" id="383536"/>
    <lineage>
        <taxon>Viruses</taxon>
        <taxon>Riboviria</taxon>
        <taxon>Orthornavirae</taxon>
        <taxon>Negarnaviricota</taxon>
        <taxon>Polyploviricotina</taxon>
        <taxon>Insthoviricetes</taxon>
        <taxon>Articulavirales</taxon>
        <taxon>Orthomyxoviridae</taxon>
        <taxon>Alphainfluenzavirus</taxon>
        <taxon>Alphainfluenzavirus influenzae</taxon>
        <taxon>Influenza A virus</taxon>
    </lineage>
</organism>